<comment type="function">
    <text evidence="1">Involved in transcription antitermination. Required for transcription of ribosomal RNA (rRNA) genes. Binds specifically to the boxA antiterminator sequence of the ribosomal RNA (rrn) operons.</text>
</comment>
<comment type="similarity">
    <text evidence="1">Belongs to the NusB family.</text>
</comment>
<name>NUSB_STAAT</name>
<reference key="1">
    <citation type="journal article" date="2007" name="BMC Microbiol.">
        <title>Subtle genetic changes enhance virulence of methicillin resistant and sensitive Staphylococcus aureus.</title>
        <authorList>
            <person name="Highlander S.K."/>
            <person name="Hulten K.G."/>
            <person name="Qin X."/>
            <person name="Jiang H."/>
            <person name="Yerrapragada S."/>
            <person name="Mason E.O. Jr."/>
            <person name="Shang Y."/>
            <person name="Williams T.M."/>
            <person name="Fortunov R.M."/>
            <person name="Liu Y."/>
            <person name="Igboeli O."/>
            <person name="Petrosino J."/>
            <person name="Tirumalai M."/>
            <person name="Uzman A."/>
            <person name="Fox G.E."/>
            <person name="Cardenas A.M."/>
            <person name="Muzny D.M."/>
            <person name="Hemphill L."/>
            <person name="Ding Y."/>
            <person name="Dugan S."/>
            <person name="Blyth P.R."/>
            <person name="Buhay C.J."/>
            <person name="Dinh H.H."/>
            <person name="Hawes A.C."/>
            <person name="Holder M."/>
            <person name="Kovar C.L."/>
            <person name="Lee S.L."/>
            <person name="Liu W."/>
            <person name="Nazareth L.V."/>
            <person name="Wang Q."/>
            <person name="Zhou J."/>
            <person name="Kaplan S.L."/>
            <person name="Weinstock G.M."/>
        </authorList>
    </citation>
    <scope>NUCLEOTIDE SEQUENCE [LARGE SCALE GENOMIC DNA]</scope>
    <source>
        <strain>USA300 / TCH1516</strain>
    </source>
</reference>
<sequence>MSRKESRVQAFQTLFQLEMKDSDLTINEAISFIKDDNPDLDFEFIHWLVSGVKGHEPVLDETISPYLKDWTIARLLKTDRIILRMATYEILHSDTPAKVVMNEAVELTKQFSDDDHYKFINGVLSNIKK</sequence>
<dbReference type="EMBL" id="CP000730">
    <property type="protein sequence ID" value="ABX29533.1"/>
    <property type="molecule type" value="Genomic_DNA"/>
</dbReference>
<dbReference type="RefSeq" id="WP_000087388.1">
    <property type="nucleotide sequence ID" value="NC_010079.1"/>
</dbReference>
<dbReference type="SMR" id="A8Z464"/>
<dbReference type="KEGG" id="sax:USA300HOU_1526"/>
<dbReference type="HOGENOM" id="CLU_087843_3_3_9"/>
<dbReference type="GO" id="GO:0005829">
    <property type="term" value="C:cytosol"/>
    <property type="evidence" value="ECO:0007669"/>
    <property type="project" value="TreeGrafter"/>
</dbReference>
<dbReference type="GO" id="GO:0003723">
    <property type="term" value="F:RNA binding"/>
    <property type="evidence" value="ECO:0007669"/>
    <property type="project" value="UniProtKB-UniRule"/>
</dbReference>
<dbReference type="GO" id="GO:0006353">
    <property type="term" value="P:DNA-templated transcription termination"/>
    <property type="evidence" value="ECO:0007669"/>
    <property type="project" value="UniProtKB-UniRule"/>
</dbReference>
<dbReference type="GO" id="GO:0031564">
    <property type="term" value="P:transcription antitermination"/>
    <property type="evidence" value="ECO:0007669"/>
    <property type="project" value="UniProtKB-KW"/>
</dbReference>
<dbReference type="FunFam" id="1.10.940.10:FF:000011">
    <property type="entry name" value="Transcription antitermination protein NusB"/>
    <property type="match status" value="1"/>
</dbReference>
<dbReference type="Gene3D" id="1.10.940.10">
    <property type="entry name" value="NusB-like"/>
    <property type="match status" value="1"/>
</dbReference>
<dbReference type="HAMAP" id="MF_00073">
    <property type="entry name" value="NusB"/>
    <property type="match status" value="1"/>
</dbReference>
<dbReference type="InterPro" id="IPR035926">
    <property type="entry name" value="NusB-like_sf"/>
</dbReference>
<dbReference type="InterPro" id="IPR011605">
    <property type="entry name" value="NusB_fam"/>
</dbReference>
<dbReference type="InterPro" id="IPR006027">
    <property type="entry name" value="NusB_RsmB_TIM44"/>
</dbReference>
<dbReference type="NCBIfam" id="TIGR01951">
    <property type="entry name" value="nusB"/>
    <property type="match status" value="1"/>
</dbReference>
<dbReference type="PANTHER" id="PTHR11078:SF3">
    <property type="entry name" value="ANTITERMINATION NUSB DOMAIN-CONTAINING PROTEIN"/>
    <property type="match status" value="1"/>
</dbReference>
<dbReference type="PANTHER" id="PTHR11078">
    <property type="entry name" value="N UTILIZATION SUBSTANCE PROTEIN B-RELATED"/>
    <property type="match status" value="1"/>
</dbReference>
<dbReference type="Pfam" id="PF01029">
    <property type="entry name" value="NusB"/>
    <property type="match status" value="1"/>
</dbReference>
<dbReference type="SUPFAM" id="SSF48013">
    <property type="entry name" value="NusB-like"/>
    <property type="match status" value="1"/>
</dbReference>
<evidence type="ECO:0000255" key="1">
    <source>
        <dbReference type="HAMAP-Rule" id="MF_00073"/>
    </source>
</evidence>
<keyword id="KW-0694">RNA-binding</keyword>
<keyword id="KW-0804">Transcription</keyword>
<keyword id="KW-0889">Transcription antitermination</keyword>
<keyword id="KW-0805">Transcription regulation</keyword>
<organism>
    <name type="scientific">Staphylococcus aureus (strain USA300 / TCH1516)</name>
    <dbReference type="NCBI Taxonomy" id="451516"/>
    <lineage>
        <taxon>Bacteria</taxon>
        <taxon>Bacillati</taxon>
        <taxon>Bacillota</taxon>
        <taxon>Bacilli</taxon>
        <taxon>Bacillales</taxon>
        <taxon>Staphylococcaceae</taxon>
        <taxon>Staphylococcus</taxon>
    </lineage>
</organism>
<accession>A8Z464</accession>
<proteinExistence type="inferred from homology"/>
<feature type="chain" id="PRO_1000075210" description="Transcription antitermination protein NusB">
    <location>
        <begin position="1"/>
        <end position="129"/>
    </location>
</feature>
<gene>
    <name evidence="1" type="primary">nusB</name>
    <name type="ordered locus">USA300HOU_1526</name>
</gene>
<protein>
    <recommendedName>
        <fullName evidence="1">Transcription antitermination protein NusB</fullName>
    </recommendedName>
    <alternativeName>
        <fullName evidence="1">Antitermination factor NusB</fullName>
    </alternativeName>
</protein>